<dbReference type="EMBL" id="X82621">
    <property type="protein sequence ID" value="CAA57942.1"/>
    <property type="molecule type" value="Genomic_DNA"/>
</dbReference>
<dbReference type="EMBL" id="X89715">
    <property type="protein sequence ID" value="CAA61859.1"/>
    <property type="molecule type" value="Genomic_DNA"/>
</dbReference>
<dbReference type="EMBL" id="Z74898">
    <property type="protein sequence ID" value="CAA99178.1"/>
    <property type="molecule type" value="Genomic_DNA"/>
</dbReference>
<dbReference type="EMBL" id="BK006948">
    <property type="protein sequence ID" value="DAA10630.1"/>
    <property type="molecule type" value="Genomic_DNA"/>
</dbReference>
<dbReference type="PIR" id="S49600">
    <property type="entry name" value="S49600"/>
</dbReference>
<dbReference type="RefSeq" id="NP_014486.1">
    <property type="nucleotide sequence ID" value="NM_001183409.1"/>
</dbReference>
<dbReference type="SMR" id="P54862"/>
<dbReference type="BioGRID" id="34262">
    <property type="interactions" value="30"/>
</dbReference>
<dbReference type="DIP" id="DIP-4071N"/>
<dbReference type="FunCoup" id="P54862">
    <property type="interactions" value="1495"/>
</dbReference>
<dbReference type="IntAct" id="P54862">
    <property type="interactions" value="3"/>
</dbReference>
<dbReference type="MINT" id="P54862"/>
<dbReference type="STRING" id="4932.YOL156W"/>
<dbReference type="TCDB" id="2.A.1.1.105">
    <property type="family name" value="the major facilitator superfamily (mfs)"/>
</dbReference>
<dbReference type="GlyCosmos" id="P54862">
    <property type="glycosylation" value="2 sites, No reported glycans"/>
</dbReference>
<dbReference type="GlyGen" id="P54862">
    <property type="glycosylation" value="2 sites"/>
</dbReference>
<dbReference type="PaxDb" id="4932-YOL156W"/>
<dbReference type="EnsemblFungi" id="YOL156W_mRNA">
    <property type="protein sequence ID" value="YOL156W"/>
    <property type="gene ID" value="YOL156W"/>
</dbReference>
<dbReference type="GeneID" id="854009"/>
<dbReference type="KEGG" id="sce:YOL156W"/>
<dbReference type="AGR" id="SGD:S000005516"/>
<dbReference type="SGD" id="S000005516">
    <property type="gene designation" value="HXT11"/>
</dbReference>
<dbReference type="VEuPathDB" id="FungiDB:YOL156W"/>
<dbReference type="eggNOG" id="KOG0254">
    <property type="taxonomic scope" value="Eukaryota"/>
</dbReference>
<dbReference type="GeneTree" id="ENSGT00940000176280"/>
<dbReference type="HOGENOM" id="CLU_001265_30_1_1"/>
<dbReference type="InParanoid" id="P54862"/>
<dbReference type="OMA" id="PHENDIE"/>
<dbReference type="OrthoDB" id="5141738at2759"/>
<dbReference type="BioCyc" id="YEAST:G3O-33544-MONOMER"/>
<dbReference type="BioGRID-ORCS" id="854009">
    <property type="hits" value="0 hits in 10 CRISPR screens"/>
</dbReference>
<dbReference type="ChiTaRS" id="HXT11">
    <property type="organism name" value="yeast"/>
</dbReference>
<dbReference type="PRO" id="PR:P54862"/>
<dbReference type="Proteomes" id="UP000002311">
    <property type="component" value="Chromosome XV"/>
</dbReference>
<dbReference type="RNAct" id="P54862">
    <property type="molecule type" value="protein"/>
</dbReference>
<dbReference type="GO" id="GO:0071944">
    <property type="term" value="C:cell periphery"/>
    <property type="evidence" value="ECO:0007005"/>
    <property type="project" value="SGD"/>
</dbReference>
<dbReference type="GO" id="GO:0005886">
    <property type="term" value="C:plasma membrane"/>
    <property type="evidence" value="ECO:0000318"/>
    <property type="project" value="GO_Central"/>
</dbReference>
<dbReference type="GO" id="GO:0005351">
    <property type="term" value="F:carbohydrate:proton symporter activity"/>
    <property type="evidence" value="ECO:0000318"/>
    <property type="project" value="GO_Central"/>
</dbReference>
<dbReference type="GO" id="GO:0055056">
    <property type="term" value="F:D-glucose transmembrane transporter activity"/>
    <property type="evidence" value="ECO:0000315"/>
    <property type="project" value="SGD"/>
</dbReference>
<dbReference type="GO" id="GO:0005353">
    <property type="term" value="F:fructose transmembrane transporter activity"/>
    <property type="evidence" value="ECO:0000315"/>
    <property type="project" value="SGD"/>
</dbReference>
<dbReference type="GO" id="GO:0005354">
    <property type="term" value="F:galactose transmembrane transporter activity"/>
    <property type="evidence" value="ECO:0000315"/>
    <property type="project" value="SGD"/>
</dbReference>
<dbReference type="GO" id="GO:0015578">
    <property type="term" value="F:mannose transmembrane transporter activity"/>
    <property type="evidence" value="ECO:0000315"/>
    <property type="project" value="SGD"/>
</dbReference>
<dbReference type="GO" id="GO:0008643">
    <property type="term" value="P:carbohydrate transport"/>
    <property type="evidence" value="ECO:0000318"/>
    <property type="project" value="GO_Central"/>
</dbReference>
<dbReference type="GO" id="GO:0008645">
    <property type="term" value="P:hexose transmembrane transport"/>
    <property type="evidence" value="ECO:0000315"/>
    <property type="project" value="SGD"/>
</dbReference>
<dbReference type="GO" id="GO:1902341">
    <property type="term" value="P:xylitol transmembrane transport"/>
    <property type="evidence" value="ECO:0000316"/>
    <property type="project" value="SGD"/>
</dbReference>
<dbReference type="CDD" id="cd17356">
    <property type="entry name" value="MFS_HXT"/>
    <property type="match status" value="1"/>
</dbReference>
<dbReference type="FunFam" id="1.20.1250.20:FF:000044">
    <property type="entry name" value="Hexose transporter Hxt3p"/>
    <property type="match status" value="1"/>
</dbReference>
<dbReference type="Gene3D" id="1.20.1250.20">
    <property type="entry name" value="MFS general substrate transporter like domains"/>
    <property type="match status" value="1"/>
</dbReference>
<dbReference type="InterPro" id="IPR020846">
    <property type="entry name" value="MFS_dom"/>
</dbReference>
<dbReference type="InterPro" id="IPR005828">
    <property type="entry name" value="MFS_sugar_transport-like"/>
</dbReference>
<dbReference type="InterPro" id="IPR050360">
    <property type="entry name" value="MFS_Sugar_Transporters"/>
</dbReference>
<dbReference type="InterPro" id="IPR036259">
    <property type="entry name" value="MFS_trans_sf"/>
</dbReference>
<dbReference type="InterPro" id="IPR003663">
    <property type="entry name" value="Sugar/inositol_transpt"/>
</dbReference>
<dbReference type="InterPro" id="IPR005829">
    <property type="entry name" value="Sugar_transporter_CS"/>
</dbReference>
<dbReference type="NCBIfam" id="TIGR00879">
    <property type="entry name" value="SP"/>
    <property type="match status" value="1"/>
</dbReference>
<dbReference type="PANTHER" id="PTHR48022:SF75">
    <property type="entry name" value="GALACTOSE TRANSPORTER-RELATED"/>
    <property type="match status" value="1"/>
</dbReference>
<dbReference type="PANTHER" id="PTHR48022">
    <property type="entry name" value="PLASTIDIC GLUCOSE TRANSPORTER 4"/>
    <property type="match status" value="1"/>
</dbReference>
<dbReference type="Pfam" id="PF00083">
    <property type="entry name" value="Sugar_tr"/>
    <property type="match status" value="1"/>
</dbReference>
<dbReference type="PRINTS" id="PR00171">
    <property type="entry name" value="SUGRTRNSPORT"/>
</dbReference>
<dbReference type="SUPFAM" id="SSF103473">
    <property type="entry name" value="MFS general substrate transporter"/>
    <property type="match status" value="1"/>
</dbReference>
<dbReference type="PROSITE" id="PS50850">
    <property type="entry name" value="MFS"/>
    <property type="match status" value="1"/>
</dbReference>
<dbReference type="PROSITE" id="PS00216">
    <property type="entry name" value="SUGAR_TRANSPORT_1"/>
    <property type="match status" value="1"/>
</dbReference>
<dbReference type="PROSITE" id="PS00217">
    <property type="entry name" value="SUGAR_TRANSPORT_2"/>
    <property type="match status" value="1"/>
</dbReference>
<evidence type="ECO:0000255" key="1"/>
<evidence type="ECO:0000256" key="2">
    <source>
        <dbReference type="SAM" id="MobiDB-lite"/>
    </source>
</evidence>
<evidence type="ECO:0000305" key="3"/>
<reference key="1">
    <citation type="submission" date="1994-11" db="EMBL/GenBank/DDBJ databases">
        <authorList>
            <person name="Wesolowski-Louvel M."/>
        </authorList>
    </citation>
    <scope>NUCLEOTIDE SEQUENCE [GENOMIC DNA]</scope>
</reference>
<reference key="2">
    <citation type="journal article" date="1996" name="Yeast">
        <title>Analysis of the DNA sequence of a 15,500 bp fragment near the left telomere of chromosome XV from Saccharomyces cerevisiae reveals a putative sugar transporter, a carboxypeptidase homologue and two new open reading frames.</title>
        <authorList>
            <person name="Gamo F.-J."/>
            <person name="Lafuente M.J."/>
            <person name="Casamayor A."/>
            <person name="Arino J."/>
            <person name="Aldea M."/>
            <person name="Casas C."/>
            <person name="Herrero E."/>
            <person name="Gancedo C."/>
        </authorList>
    </citation>
    <scope>NUCLEOTIDE SEQUENCE [GENOMIC DNA]</scope>
    <source>
        <strain>ATCC 96604 / S288c / FY1679</strain>
    </source>
</reference>
<reference key="3">
    <citation type="journal article" date="1997" name="Nature">
        <title>The nucleotide sequence of Saccharomyces cerevisiae chromosome XV.</title>
        <authorList>
            <person name="Dujon B."/>
            <person name="Albermann K."/>
            <person name="Aldea M."/>
            <person name="Alexandraki D."/>
            <person name="Ansorge W."/>
            <person name="Arino J."/>
            <person name="Benes V."/>
            <person name="Bohn C."/>
            <person name="Bolotin-Fukuhara M."/>
            <person name="Bordonne R."/>
            <person name="Boyer J."/>
            <person name="Camasses A."/>
            <person name="Casamayor A."/>
            <person name="Casas C."/>
            <person name="Cheret G."/>
            <person name="Cziepluch C."/>
            <person name="Daignan-Fornier B."/>
            <person name="Dang V.-D."/>
            <person name="de Haan M."/>
            <person name="Delius H."/>
            <person name="Durand P."/>
            <person name="Fairhead C."/>
            <person name="Feldmann H."/>
            <person name="Gaillon L."/>
            <person name="Galisson F."/>
            <person name="Gamo F.-J."/>
            <person name="Gancedo C."/>
            <person name="Goffeau A."/>
            <person name="Goulding S.E."/>
            <person name="Grivell L.A."/>
            <person name="Habbig B."/>
            <person name="Hand N.J."/>
            <person name="Hani J."/>
            <person name="Hattenhorst U."/>
            <person name="Hebling U."/>
            <person name="Hernando Y."/>
            <person name="Herrero E."/>
            <person name="Heumann K."/>
            <person name="Hiesel R."/>
            <person name="Hilger F."/>
            <person name="Hofmann B."/>
            <person name="Hollenberg C.P."/>
            <person name="Hughes B."/>
            <person name="Jauniaux J.-C."/>
            <person name="Kalogeropoulos A."/>
            <person name="Katsoulou C."/>
            <person name="Kordes E."/>
            <person name="Lafuente M.J."/>
            <person name="Landt O."/>
            <person name="Louis E.J."/>
            <person name="Maarse A.C."/>
            <person name="Madania A."/>
            <person name="Mannhaupt G."/>
            <person name="Marck C."/>
            <person name="Martin R.P."/>
            <person name="Mewes H.-W."/>
            <person name="Michaux G."/>
            <person name="Paces V."/>
            <person name="Parle-McDermott A.G."/>
            <person name="Pearson B.M."/>
            <person name="Perrin A."/>
            <person name="Pettersson B."/>
            <person name="Poch O."/>
            <person name="Pohl T.M."/>
            <person name="Poirey R."/>
            <person name="Portetelle D."/>
            <person name="Pujol A."/>
            <person name="Purnelle B."/>
            <person name="Ramezani Rad M."/>
            <person name="Rechmann S."/>
            <person name="Schwager C."/>
            <person name="Schweizer M."/>
            <person name="Sor F."/>
            <person name="Sterky F."/>
            <person name="Tarassov I.A."/>
            <person name="Teodoru C."/>
            <person name="Tettelin H."/>
            <person name="Thierry A."/>
            <person name="Tobiasch E."/>
            <person name="Tzermia M."/>
            <person name="Uhlen M."/>
            <person name="Unseld M."/>
            <person name="Valens M."/>
            <person name="Vandenbol M."/>
            <person name="Vetter I."/>
            <person name="Vlcek C."/>
            <person name="Voet M."/>
            <person name="Volckaert G."/>
            <person name="Voss H."/>
            <person name="Wambutt R."/>
            <person name="Wedler H."/>
            <person name="Wiemann S."/>
            <person name="Winsor B."/>
            <person name="Wolfe K.H."/>
            <person name="Zollner A."/>
            <person name="Zumstein E."/>
            <person name="Kleine K."/>
        </authorList>
    </citation>
    <scope>NUCLEOTIDE SEQUENCE [LARGE SCALE GENOMIC DNA]</scope>
    <source>
        <strain>ATCC 204508 / S288c</strain>
    </source>
</reference>
<reference key="4">
    <citation type="journal article" date="2014" name="G3 (Bethesda)">
        <title>The reference genome sequence of Saccharomyces cerevisiae: Then and now.</title>
        <authorList>
            <person name="Engel S.R."/>
            <person name="Dietrich F.S."/>
            <person name="Fisk D.G."/>
            <person name="Binkley G."/>
            <person name="Balakrishnan R."/>
            <person name="Costanzo M.C."/>
            <person name="Dwight S.S."/>
            <person name="Hitz B.C."/>
            <person name="Karra K."/>
            <person name="Nash R.S."/>
            <person name="Weng S."/>
            <person name="Wong E.D."/>
            <person name="Lloyd P."/>
            <person name="Skrzypek M.S."/>
            <person name="Miyasato S.R."/>
            <person name="Simison M."/>
            <person name="Cherry J.M."/>
        </authorList>
    </citation>
    <scope>GENOME REANNOTATION</scope>
    <source>
        <strain>ATCC 204508 / S288c</strain>
    </source>
</reference>
<reference key="5">
    <citation type="journal article" date="2006" name="Proc. Natl. Acad. Sci. U.S.A.">
        <title>A global topology map of the Saccharomyces cerevisiae membrane proteome.</title>
        <authorList>
            <person name="Kim H."/>
            <person name="Melen K."/>
            <person name="Oesterberg M."/>
            <person name="von Heijne G."/>
        </authorList>
    </citation>
    <scope>TOPOLOGY [LARGE SCALE ANALYSIS]</scope>
    <source>
        <strain>ATCC 208353 / W303-1A</strain>
    </source>
</reference>
<name>HXT11_YEAST</name>
<accession>P54862</accession>
<accession>D6W1R4</accession>
<comment type="function">
    <text>Probable glucose transporter.</text>
</comment>
<comment type="subcellular location">
    <subcellularLocation>
        <location>Membrane</location>
        <topology>Multi-pass membrane protein</topology>
    </subcellularLocation>
</comment>
<comment type="similarity">
    <text evidence="3">Belongs to the major facilitator superfamily. Sugar transporter (TC 2.A.1.1) family.</text>
</comment>
<protein>
    <recommendedName>
        <fullName>Hexose transporter HXT11</fullName>
    </recommendedName>
    <alternativeName>
        <fullName>Low-affinity glucose transporter LGT3</fullName>
    </alternativeName>
</protein>
<proteinExistence type="evidence at protein level"/>
<sequence length="567" mass="62733">MSGVNNTSANELSTTMSNSNSAVGAPSVKTEHGDSKNSLNLDANEPPIDLPQKPLSAYTTVAILCLMIAFGGFIFGWDTGTISGFVNLSDFIRRFGQKNDKGTYYLSKVRMGLIVSIFNIGCAIGGIVLSKVGDIYGRRIGLITVTAIYVVGILIQITSINKWYQYFIGRIISGLGVGGIAVLSPMLISEVAPKHIRGTLVQLYQLMGTMGIFLGYCTNYGTKNYHNATQWRVGLGLCFAWATFMVSGMMFVPESPRYLIEVGKDEEAKRSLSKSNKVSVDDPALLVEYDTIKAGIELEKLAGNASWSELLSTKTKVFQRVLMGVMIQSLQQLTGDNYFFYYGTTIFKSVGLKDSFQTSIIIGVVNFFSSFIAVYTIERFGRRTCLLWGAASMLCCFAVFASVGVTKLWPQGSSHQDITSQGAGNCMIVFTMFFIFSFATTWAGGCYVIVSETFPLRVKSRGMAIATAANWMWGFLISFFTPFITGAINFYYGYVFLGCLVFAYFYVFFFVPETKGLTLEEVNTMWLEGVPAWKSASWVPPERRTADYDADAIDHDNRPIYKRFFSS</sequence>
<feature type="chain" id="PRO_0000050401" description="Hexose transporter HXT11">
    <location>
        <begin position="1"/>
        <end position="567"/>
    </location>
</feature>
<feature type="topological domain" description="Cytoplasmic" evidence="1">
    <location>
        <begin position="1"/>
        <end position="56"/>
    </location>
</feature>
<feature type="transmembrane region" description="Helical; Name=1" evidence="1">
    <location>
        <begin position="57"/>
        <end position="77"/>
    </location>
</feature>
<feature type="topological domain" description="Extracellular" evidence="1">
    <location>
        <begin position="78"/>
        <end position="112"/>
    </location>
</feature>
<feature type="transmembrane region" description="Helical; Name=2" evidence="1">
    <location>
        <begin position="113"/>
        <end position="133"/>
    </location>
</feature>
<feature type="topological domain" description="Cytoplasmic" evidence="1">
    <location>
        <begin position="134"/>
        <end position="139"/>
    </location>
</feature>
<feature type="transmembrane region" description="Helical; Name=3" evidence="1">
    <location>
        <begin position="140"/>
        <end position="160"/>
    </location>
</feature>
<feature type="topological domain" description="Extracellular" evidence="1">
    <location>
        <begin position="161"/>
        <end position="170"/>
    </location>
</feature>
<feature type="transmembrane region" description="Helical; Name=4" evidence="1">
    <location>
        <begin position="171"/>
        <end position="191"/>
    </location>
</feature>
<feature type="topological domain" description="Cytoplasmic" evidence="1">
    <location>
        <begin position="192"/>
        <end position="197"/>
    </location>
</feature>
<feature type="transmembrane region" description="Helical; Name=5" evidence="1">
    <location>
        <begin position="198"/>
        <end position="218"/>
    </location>
</feature>
<feature type="topological domain" description="Extracellular" evidence="1">
    <location>
        <begin position="219"/>
        <end position="232"/>
    </location>
</feature>
<feature type="transmembrane region" description="Helical; Name=6" evidence="1">
    <location>
        <begin position="233"/>
        <end position="253"/>
    </location>
</feature>
<feature type="topological domain" description="Cytoplasmic" evidence="1">
    <location>
        <begin position="254"/>
        <end position="336"/>
    </location>
</feature>
<feature type="transmembrane region" description="Helical; Name=7" evidence="1">
    <location>
        <begin position="337"/>
        <end position="353"/>
    </location>
</feature>
<feature type="topological domain" description="Extracellular" evidence="1">
    <location>
        <begin position="354"/>
        <end position="359"/>
    </location>
</feature>
<feature type="transmembrane region" description="Helical; Name=8" evidence="1">
    <location>
        <begin position="360"/>
        <end position="377"/>
    </location>
</feature>
<feature type="topological domain" description="Cytoplasmic" evidence="1">
    <location>
        <begin position="378"/>
        <end position="384"/>
    </location>
</feature>
<feature type="transmembrane region" description="Helical; Name=9" evidence="1">
    <location>
        <begin position="385"/>
        <end position="405"/>
    </location>
</feature>
<feature type="topological domain" description="Extracellular" evidence="1">
    <location>
        <begin position="406"/>
        <end position="429"/>
    </location>
</feature>
<feature type="transmembrane region" description="Helical; Name=10" evidence="1">
    <location>
        <begin position="430"/>
        <end position="450"/>
    </location>
</feature>
<feature type="topological domain" description="Cytoplasmic" evidence="1">
    <location>
        <begin position="451"/>
        <end position="467"/>
    </location>
</feature>
<feature type="transmembrane region" description="Helical; Name=11" evidence="1">
    <location>
        <begin position="468"/>
        <end position="488"/>
    </location>
</feature>
<feature type="topological domain" description="Extracellular" evidence="1">
    <location>
        <position position="489"/>
    </location>
</feature>
<feature type="transmembrane region" description="Helical; Name=12" evidence="1">
    <location>
        <begin position="490"/>
        <end position="510"/>
    </location>
</feature>
<feature type="topological domain" description="Cytoplasmic" evidence="1">
    <location>
        <begin position="511"/>
        <end position="567"/>
    </location>
</feature>
<feature type="region of interest" description="Disordered" evidence="2">
    <location>
        <begin position="1"/>
        <end position="45"/>
    </location>
</feature>
<feature type="compositionally biased region" description="Polar residues" evidence="2">
    <location>
        <begin position="1"/>
        <end position="22"/>
    </location>
</feature>
<feature type="glycosylation site" description="N-linked (GlcNAc...) asparagine" evidence="1">
    <location>
        <position position="87"/>
    </location>
</feature>
<feature type="glycosylation site" description="N-linked (GlcNAc...) asparagine" evidence="1">
    <location>
        <position position="227"/>
    </location>
</feature>
<organism>
    <name type="scientific">Saccharomyces cerevisiae (strain ATCC 204508 / S288c)</name>
    <name type="common">Baker's yeast</name>
    <dbReference type="NCBI Taxonomy" id="559292"/>
    <lineage>
        <taxon>Eukaryota</taxon>
        <taxon>Fungi</taxon>
        <taxon>Dikarya</taxon>
        <taxon>Ascomycota</taxon>
        <taxon>Saccharomycotina</taxon>
        <taxon>Saccharomycetes</taxon>
        <taxon>Saccharomycetales</taxon>
        <taxon>Saccharomycetaceae</taxon>
        <taxon>Saccharomyces</taxon>
    </lineage>
</organism>
<gene>
    <name type="primary">HXT11</name>
    <name type="synonym">LGT3</name>
    <name type="ordered locus">YOL156W</name>
    <name type="ORF">AOB567</name>
    <name type="ORF">O0414</name>
</gene>
<keyword id="KW-0325">Glycoprotein</keyword>
<keyword id="KW-0472">Membrane</keyword>
<keyword id="KW-1185">Reference proteome</keyword>
<keyword id="KW-0677">Repeat</keyword>
<keyword id="KW-0762">Sugar transport</keyword>
<keyword id="KW-0812">Transmembrane</keyword>
<keyword id="KW-1133">Transmembrane helix</keyword>
<keyword id="KW-0813">Transport</keyword>